<feature type="chain" id="PRO_1000118989" description="2-C-methyl-D-erythritol 2,4-cyclodiphosphate synthase">
    <location>
        <begin position="1"/>
        <end position="157"/>
    </location>
</feature>
<feature type="binding site" evidence="1">
    <location>
        <begin position="9"/>
        <end position="11"/>
    </location>
    <ligand>
        <name>4-CDP-2-C-methyl-D-erythritol 2-phosphate</name>
        <dbReference type="ChEBI" id="CHEBI:57919"/>
    </ligand>
</feature>
<feature type="binding site" evidence="1">
    <location>
        <position position="9"/>
    </location>
    <ligand>
        <name>a divalent metal cation</name>
        <dbReference type="ChEBI" id="CHEBI:60240"/>
    </ligand>
</feature>
<feature type="binding site" evidence="1">
    <location>
        <position position="11"/>
    </location>
    <ligand>
        <name>a divalent metal cation</name>
        <dbReference type="ChEBI" id="CHEBI:60240"/>
    </ligand>
</feature>
<feature type="binding site" evidence="1">
    <location>
        <begin position="35"/>
        <end position="36"/>
    </location>
    <ligand>
        <name>4-CDP-2-C-methyl-D-erythritol 2-phosphate</name>
        <dbReference type="ChEBI" id="CHEBI:57919"/>
    </ligand>
</feature>
<feature type="binding site" evidence="1">
    <location>
        <position position="43"/>
    </location>
    <ligand>
        <name>a divalent metal cation</name>
        <dbReference type="ChEBI" id="CHEBI:60240"/>
    </ligand>
</feature>
<feature type="binding site" evidence="1">
    <location>
        <begin position="57"/>
        <end position="59"/>
    </location>
    <ligand>
        <name>4-CDP-2-C-methyl-D-erythritol 2-phosphate</name>
        <dbReference type="ChEBI" id="CHEBI:57919"/>
    </ligand>
</feature>
<feature type="binding site" evidence="1">
    <location>
        <position position="140"/>
    </location>
    <ligand>
        <name>4-CDP-2-C-methyl-D-erythritol 2-phosphate</name>
        <dbReference type="ChEBI" id="CHEBI:57919"/>
    </ligand>
</feature>
<feature type="binding site" evidence="1">
    <location>
        <position position="143"/>
    </location>
    <ligand>
        <name>4-CDP-2-C-methyl-D-erythritol 2-phosphate</name>
        <dbReference type="ChEBI" id="CHEBI:57919"/>
    </ligand>
</feature>
<feature type="site" description="Transition state stabilizer" evidence="1">
    <location>
        <position position="35"/>
    </location>
</feature>
<feature type="site" description="Transition state stabilizer" evidence="1">
    <location>
        <position position="134"/>
    </location>
</feature>
<organism>
    <name type="scientific">Caldicellulosiruptor bescii (strain ATCC BAA-1888 / DSM 6725 / KCTC 15123 / Z-1320)</name>
    <name type="common">Anaerocellum thermophilum</name>
    <dbReference type="NCBI Taxonomy" id="521460"/>
    <lineage>
        <taxon>Bacteria</taxon>
        <taxon>Bacillati</taxon>
        <taxon>Bacillota</taxon>
        <taxon>Bacillota incertae sedis</taxon>
        <taxon>Caldicellulosiruptorales</taxon>
        <taxon>Caldicellulosiruptoraceae</taxon>
        <taxon>Caldicellulosiruptor</taxon>
    </lineage>
</organism>
<evidence type="ECO:0000255" key="1">
    <source>
        <dbReference type="HAMAP-Rule" id="MF_00107"/>
    </source>
</evidence>
<dbReference type="EC" id="4.6.1.12" evidence="1"/>
<dbReference type="EMBL" id="CP001393">
    <property type="protein sequence ID" value="ACM60238.1"/>
    <property type="molecule type" value="Genomic_DNA"/>
</dbReference>
<dbReference type="RefSeq" id="WP_015907637.1">
    <property type="nucleotide sequence ID" value="NC_012034.1"/>
</dbReference>
<dbReference type="SMR" id="B9MRD4"/>
<dbReference type="STRING" id="521460.Athe_1137"/>
<dbReference type="GeneID" id="31772487"/>
<dbReference type="KEGG" id="ate:Athe_1137"/>
<dbReference type="eggNOG" id="COG0245">
    <property type="taxonomic scope" value="Bacteria"/>
</dbReference>
<dbReference type="HOGENOM" id="CLU_084630_2_0_9"/>
<dbReference type="UniPathway" id="UPA00056">
    <property type="reaction ID" value="UER00095"/>
</dbReference>
<dbReference type="Proteomes" id="UP000007723">
    <property type="component" value="Chromosome"/>
</dbReference>
<dbReference type="GO" id="GO:0008685">
    <property type="term" value="F:2-C-methyl-D-erythritol 2,4-cyclodiphosphate synthase activity"/>
    <property type="evidence" value="ECO:0007669"/>
    <property type="project" value="UniProtKB-UniRule"/>
</dbReference>
<dbReference type="GO" id="GO:0046872">
    <property type="term" value="F:metal ion binding"/>
    <property type="evidence" value="ECO:0007669"/>
    <property type="project" value="UniProtKB-KW"/>
</dbReference>
<dbReference type="GO" id="GO:0019288">
    <property type="term" value="P:isopentenyl diphosphate biosynthetic process, methylerythritol 4-phosphate pathway"/>
    <property type="evidence" value="ECO:0007669"/>
    <property type="project" value="UniProtKB-UniRule"/>
</dbReference>
<dbReference type="GO" id="GO:0016114">
    <property type="term" value="P:terpenoid biosynthetic process"/>
    <property type="evidence" value="ECO:0007669"/>
    <property type="project" value="InterPro"/>
</dbReference>
<dbReference type="CDD" id="cd00554">
    <property type="entry name" value="MECDP_synthase"/>
    <property type="match status" value="1"/>
</dbReference>
<dbReference type="FunFam" id="3.30.1330.50:FF:000001">
    <property type="entry name" value="2-C-methyl-D-erythritol 2,4-cyclodiphosphate synthase"/>
    <property type="match status" value="1"/>
</dbReference>
<dbReference type="Gene3D" id="3.30.1330.50">
    <property type="entry name" value="2-C-methyl-D-erythritol 2,4-cyclodiphosphate synthase"/>
    <property type="match status" value="1"/>
</dbReference>
<dbReference type="HAMAP" id="MF_00107">
    <property type="entry name" value="IspF"/>
    <property type="match status" value="1"/>
</dbReference>
<dbReference type="InterPro" id="IPR003526">
    <property type="entry name" value="MECDP_synthase"/>
</dbReference>
<dbReference type="InterPro" id="IPR020555">
    <property type="entry name" value="MECDP_synthase_CS"/>
</dbReference>
<dbReference type="InterPro" id="IPR036571">
    <property type="entry name" value="MECDP_synthase_sf"/>
</dbReference>
<dbReference type="NCBIfam" id="TIGR00151">
    <property type="entry name" value="ispF"/>
    <property type="match status" value="1"/>
</dbReference>
<dbReference type="PANTHER" id="PTHR43181">
    <property type="entry name" value="2-C-METHYL-D-ERYTHRITOL 2,4-CYCLODIPHOSPHATE SYNTHASE, CHLOROPLASTIC"/>
    <property type="match status" value="1"/>
</dbReference>
<dbReference type="PANTHER" id="PTHR43181:SF1">
    <property type="entry name" value="2-C-METHYL-D-ERYTHRITOL 2,4-CYCLODIPHOSPHATE SYNTHASE, CHLOROPLASTIC"/>
    <property type="match status" value="1"/>
</dbReference>
<dbReference type="Pfam" id="PF02542">
    <property type="entry name" value="YgbB"/>
    <property type="match status" value="1"/>
</dbReference>
<dbReference type="SUPFAM" id="SSF69765">
    <property type="entry name" value="IpsF-like"/>
    <property type="match status" value="1"/>
</dbReference>
<dbReference type="PROSITE" id="PS01350">
    <property type="entry name" value="ISPF"/>
    <property type="match status" value="1"/>
</dbReference>
<name>ISPF_CALBD</name>
<proteinExistence type="inferred from homology"/>
<gene>
    <name evidence="1" type="primary">ispF</name>
    <name type="ordered locus">Athe_1137</name>
</gene>
<comment type="function">
    <text evidence="1">Involved in the biosynthesis of isopentenyl diphosphate (IPP) and dimethylallyl diphosphate (DMAPP), two major building blocks of isoprenoid compounds. Catalyzes the conversion of 4-diphosphocytidyl-2-C-methyl-D-erythritol 2-phosphate (CDP-ME2P) to 2-C-methyl-D-erythritol 2,4-cyclodiphosphate (ME-CPP) with a corresponding release of cytidine 5-monophosphate (CMP).</text>
</comment>
<comment type="catalytic activity">
    <reaction evidence="1">
        <text>4-CDP-2-C-methyl-D-erythritol 2-phosphate = 2-C-methyl-D-erythritol 2,4-cyclic diphosphate + CMP</text>
        <dbReference type="Rhea" id="RHEA:23864"/>
        <dbReference type="ChEBI" id="CHEBI:57919"/>
        <dbReference type="ChEBI" id="CHEBI:58483"/>
        <dbReference type="ChEBI" id="CHEBI:60377"/>
        <dbReference type="EC" id="4.6.1.12"/>
    </reaction>
</comment>
<comment type="cofactor">
    <cofactor evidence="1">
        <name>a divalent metal cation</name>
        <dbReference type="ChEBI" id="CHEBI:60240"/>
    </cofactor>
    <text evidence="1">Binds 1 divalent metal cation per subunit.</text>
</comment>
<comment type="pathway">
    <text evidence="1">Isoprenoid biosynthesis; isopentenyl diphosphate biosynthesis via DXP pathway; isopentenyl diphosphate from 1-deoxy-D-xylulose 5-phosphate: step 4/6.</text>
</comment>
<comment type="subunit">
    <text evidence="1">Homotrimer.</text>
</comment>
<comment type="similarity">
    <text evidence="1">Belongs to the IspF family.</text>
</comment>
<accession>B9MRD4</accession>
<reference key="1">
    <citation type="submission" date="2009-01" db="EMBL/GenBank/DDBJ databases">
        <title>Complete sequence of chromosome of Caldicellulosiruptor becscii DSM 6725.</title>
        <authorList>
            <person name="Lucas S."/>
            <person name="Copeland A."/>
            <person name="Lapidus A."/>
            <person name="Glavina del Rio T."/>
            <person name="Tice H."/>
            <person name="Bruce D."/>
            <person name="Goodwin L."/>
            <person name="Pitluck S."/>
            <person name="Sims D."/>
            <person name="Meincke L."/>
            <person name="Brettin T."/>
            <person name="Detter J.C."/>
            <person name="Han C."/>
            <person name="Larimer F."/>
            <person name="Land M."/>
            <person name="Hauser L."/>
            <person name="Kyrpides N."/>
            <person name="Ovchinnikova G."/>
            <person name="Kataeva I."/>
            <person name="Adams M.W.W."/>
        </authorList>
    </citation>
    <scope>NUCLEOTIDE SEQUENCE [LARGE SCALE GENOMIC DNA]</scope>
    <source>
        <strain>ATCC BAA-1888 / DSM 6725 / KCTC 15123 / Z-1320</strain>
    </source>
</reference>
<keyword id="KW-0414">Isoprene biosynthesis</keyword>
<keyword id="KW-0456">Lyase</keyword>
<keyword id="KW-0479">Metal-binding</keyword>
<sequence>MFKVGIGYDVHRFVEGRKLILGGVEIPFEKGLLGHSDADVLVHAIIDAILGAMGENDIGRLFPDSSPNYKDISSLVLLKEVAKLLEEKNMKIVNIDSTVVSQRPKISPYTNEMKNKIADCLKIESTQVNIKGKTTEGLGFEGREEGISAYAVVLICE</sequence>
<protein>
    <recommendedName>
        <fullName evidence="1">2-C-methyl-D-erythritol 2,4-cyclodiphosphate synthase</fullName>
        <shortName evidence="1">MECDP-synthase</shortName>
        <shortName evidence="1">MECPP-synthase</shortName>
        <shortName evidence="1">MECPS</shortName>
        <ecNumber evidence="1">4.6.1.12</ecNumber>
    </recommendedName>
</protein>